<comment type="function">
    <text evidence="1">Binds directly to 23S ribosomal RNA and is necessary for the in vitro assembly process of the 50S ribosomal subunit. It is not involved in the protein synthesizing functions of that subunit.</text>
</comment>
<comment type="subcellular location">
    <subcellularLocation>
        <location>Plastid</location>
        <location>Chloroplast</location>
    </subcellularLocation>
</comment>
<comment type="similarity">
    <text evidence="1">Belongs to the bacterial ribosomal protein bL20 family.</text>
</comment>
<protein>
    <recommendedName>
        <fullName evidence="1">Large ribosomal subunit protein bL20c</fullName>
    </recommendedName>
    <alternativeName>
        <fullName evidence="2">50S ribosomal protein L20, chloroplastic</fullName>
    </alternativeName>
</protein>
<sequence>MTRIKRGYIARRRRTKLRLFASSFRGAHSRLTRTMTQQRIRALVSAHRDRGKRKRDFRRLWITRINAVIHEMGVFYSYNQFIHNLYKKQLLLNRKILAQIALLNRSCLYTISNDIKK</sequence>
<organism>
    <name type="scientific">Capsella bursa-pastoris</name>
    <name type="common">Shepherd's purse</name>
    <name type="synonym">Thlaspi bursa-pastoris</name>
    <dbReference type="NCBI Taxonomy" id="3719"/>
    <lineage>
        <taxon>Eukaryota</taxon>
        <taxon>Viridiplantae</taxon>
        <taxon>Streptophyta</taxon>
        <taxon>Embryophyta</taxon>
        <taxon>Tracheophyta</taxon>
        <taxon>Spermatophyta</taxon>
        <taxon>Magnoliopsida</taxon>
        <taxon>eudicotyledons</taxon>
        <taxon>Gunneridae</taxon>
        <taxon>Pentapetalae</taxon>
        <taxon>rosids</taxon>
        <taxon>malvids</taxon>
        <taxon>Brassicales</taxon>
        <taxon>Brassicaceae</taxon>
        <taxon>Camelineae</taxon>
        <taxon>Capsella</taxon>
    </lineage>
</organism>
<gene>
    <name evidence="1" type="primary">rpl20</name>
</gene>
<dbReference type="EMBL" id="AP009371">
    <property type="protein sequence ID" value="BAF50220.1"/>
    <property type="molecule type" value="Genomic_DNA"/>
</dbReference>
<dbReference type="RefSeq" id="YP_001123396.1">
    <property type="nucleotide sequence ID" value="NC_009270.1"/>
</dbReference>
<dbReference type="SMR" id="A4QKL5"/>
<dbReference type="GeneID" id="4961607"/>
<dbReference type="GO" id="GO:0009507">
    <property type="term" value="C:chloroplast"/>
    <property type="evidence" value="ECO:0007669"/>
    <property type="project" value="UniProtKB-SubCell"/>
</dbReference>
<dbReference type="GO" id="GO:1990904">
    <property type="term" value="C:ribonucleoprotein complex"/>
    <property type="evidence" value="ECO:0007669"/>
    <property type="project" value="UniProtKB-KW"/>
</dbReference>
<dbReference type="GO" id="GO:0005840">
    <property type="term" value="C:ribosome"/>
    <property type="evidence" value="ECO:0007669"/>
    <property type="project" value="UniProtKB-KW"/>
</dbReference>
<dbReference type="GO" id="GO:0019843">
    <property type="term" value="F:rRNA binding"/>
    <property type="evidence" value="ECO:0007669"/>
    <property type="project" value="UniProtKB-UniRule"/>
</dbReference>
<dbReference type="GO" id="GO:0003735">
    <property type="term" value="F:structural constituent of ribosome"/>
    <property type="evidence" value="ECO:0007669"/>
    <property type="project" value="InterPro"/>
</dbReference>
<dbReference type="GO" id="GO:0000027">
    <property type="term" value="P:ribosomal large subunit assembly"/>
    <property type="evidence" value="ECO:0007669"/>
    <property type="project" value="UniProtKB-UniRule"/>
</dbReference>
<dbReference type="GO" id="GO:0006412">
    <property type="term" value="P:translation"/>
    <property type="evidence" value="ECO:0007669"/>
    <property type="project" value="InterPro"/>
</dbReference>
<dbReference type="CDD" id="cd07026">
    <property type="entry name" value="Ribosomal_L20"/>
    <property type="match status" value="1"/>
</dbReference>
<dbReference type="FunFam" id="1.10.1900.20:FF:000001">
    <property type="entry name" value="50S ribosomal protein L20"/>
    <property type="match status" value="1"/>
</dbReference>
<dbReference type="Gene3D" id="6.10.160.10">
    <property type="match status" value="1"/>
</dbReference>
<dbReference type="Gene3D" id="1.10.1900.20">
    <property type="entry name" value="Ribosomal protein L20"/>
    <property type="match status" value="1"/>
</dbReference>
<dbReference type="HAMAP" id="MF_00382">
    <property type="entry name" value="Ribosomal_bL20"/>
    <property type="match status" value="1"/>
</dbReference>
<dbReference type="InterPro" id="IPR005813">
    <property type="entry name" value="Ribosomal_bL20"/>
</dbReference>
<dbReference type="InterPro" id="IPR049946">
    <property type="entry name" value="RIBOSOMAL_L20_CS"/>
</dbReference>
<dbReference type="InterPro" id="IPR035566">
    <property type="entry name" value="Ribosomal_protein_bL20_C"/>
</dbReference>
<dbReference type="NCBIfam" id="TIGR01032">
    <property type="entry name" value="rplT_bact"/>
    <property type="match status" value="1"/>
</dbReference>
<dbReference type="PANTHER" id="PTHR10986">
    <property type="entry name" value="39S RIBOSOMAL PROTEIN L20"/>
    <property type="match status" value="1"/>
</dbReference>
<dbReference type="Pfam" id="PF00453">
    <property type="entry name" value="Ribosomal_L20"/>
    <property type="match status" value="1"/>
</dbReference>
<dbReference type="PRINTS" id="PR00062">
    <property type="entry name" value="RIBOSOMALL20"/>
</dbReference>
<dbReference type="SUPFAM" id="SSF74731">
    <property type="entry name" value="Ribosomal protein L20"/>
    <property type="match status" value="1"/>
</dbReference>
<dbReference type="PROSITE" id="PS00937">
    <property type="entry name" value="RIBOSOMAL_L20"/>
    <property type="match status" value="1"/>
</dbReference>
<reference key="1">
    <citation type="submission" date="2007-03" db="EMBL/GenBank/DDBJ databases">
        <title>Sequencing analysis of Capsella bursa-pastoris JO22 chloroplast DNA.</title>
        <authorList>
            <person name="Hosouchi T."/>
            <person name="Tsuruoka H."/>
            <person name="Kotani H."/>
        </authorList>
    </citation>
    <scope>NUCLEOTIDE SEQUENCE [LARGE SCALE GENOMIC DNA]</scope>
</reference>
<accession>A4QKL5</accession>
<geneLocation type="chloroplast"/>
<proteinExistence type="inferred from homology"/>
<keyword id="KW-0150">Chloroplast</keyword>
<keyword id="KW-0934">Plastid</keyword>
<keyword id="KW-0687">Ribonucleoprotein</keyword>
<keyword id="KW-0689">Ribosomal protein</keyword>
<keyword id="KW-0694">RNA-binding</keyword>
<keyword id="KW-0699">rRNA-binding</keyword>
<feature type="chain" id="PRO_0000355491" description="Large ribosomal subunit protein bL20c">
    <location>
        <begin position="1"/>
        <end position="117"/>
    </location>
</feature>
<name>RK20_CAPBU</name>
<evidence type="ECO:0000255" key="1">
    <source>
        <dbReference type="HAMAP-Rule" id="MF_00382"/>
    </source>
</evidence>
<evidence type="ECO:0000305" key="2"/>